<accession>A7T1N0</accession>
<keyword id="KW-0002">3D-structure</keyword>
<keyword id="KW-0106">Calcium</keyword>
<keyword id="KW-0107">Calcium channel</keyword>
<keyword id="KW-0109">Calcium transport</keyword>
<keyword id="KW-1003">Cell membrane</keyword>
<keyword id="KW-0175">Coiled coil</keyword>
<keyword id="KW-0325">Glycoprotein</keyword>
<keyword id="KW-0407">Ion channel</keyword>
<keyword id="KW-0406">Ion transport</keyword>
<keyword id="KW-0472">Membrane</keyword>
<keyword id="KW-0479">Metal-binding</keyword>
<keyword id="KW-1185">Reference proteome</keyword>
<keyword id="KW-0915">Sodium</keyword>
<keyword id="KW-0894">Sodium channel</keyword>
<keyword id="KW-0739">Sodium transport</keyword>
<keyword id="KW-0812">Transmembrane</keyword>
<keyword id="KW-1133">Transmembrane helix</keyword>
<keyword id="KW-0813">Transport</keyword>
<dbReference type="EMBL" id="DS470128">
    <property type="protein sequence ID" value="EDO30135.1"/>
    <property type="molecule type" value="Genomic_DNA"/>
</dbReference>
<dbReference type="RefSeq" id="XP_001622235.1">
    <property type="nucleotide sequence ID" value="XM_001622185.1"/>
</dbReference>
<dbReference type="PDB" id="6CO7">
    <property type="method" value="EM"/>
    <property type="resolution" value="3.07 A"/>
    <property type="chains" value="A/B/C/D=1-1551"/>
</dbReference>
<dbReference type="PDB" id="9JJE">
    <property type="method" value="EM"/>
    <property type="resolution" value="2.52 A"/>
    <property type="chains" value="A/B/C/D=1-1551"/>
</dbReference>
<dbReference type="PDB" id="9JJF">
    <property type="method" value="EM"/>
    <property type="resolution" value="2.65 A"/>
    <property type="chains" value="A=1-1551"/>
</dbReference>
<dbReference type="PDBsum" id="6CO7"/>
<dbReference type="PDBsum" id="9JJE"/>
<dbReference type="PDBsum" id="9JJF"/>
<dbReference type="EMDB" id="EMD-61524"/>
<dbReference type="EMDB" id="EMD-61525"/>
<dbReference type="EMDB" id="EMD-7542"/>
<dbReference type="SMR" id="A7T1N0"/>
<dbReference type="STRING" id="45351.A7T1N0"/>
<dbReference type="GlyCosmos" id="A7T1N0">
    <property type="glycosylation" value="1 site, No reported glycans"/>
</dbReference>
<dbReference type="iPTMnet" id="A7T1N0"/>
<dbReference type="EnsemblMetazoa" id="EDO30135">
    <property type="protein sequence ID" value="EDO30135"/>
    <property type="gene ID" value="NEMVEDRAFT_v1g248535"/>
</dbReference>
<dbReference type="GeneID" id="5500864"/>
<dbReference type="KEGG" id="nve:5500864"/>
<dbReference type="eggNOG" id="KOG3614">
    <property type="taxonomic scope" value="Eukaryota"/>
</dbReference>
<dbReference type="eggNOG" id="KOG4195">
    <property type="taxonomic scope" value="Eukaryota"/>
</dbReference>
<dbReference type="HOGENOM" id="CLU_001390_0_3_1"/>
<dbReference type="InParanoid" id="A7T1N0"/>
<dbReference type="OMA" id="EFLIYEP"/>
<dbReference type="OrthoDB" id="310870at2759"/>
<dbReference type="PhylomeDB" id="A7T1N0"/>
<dbReference type="Proteomes" id="UP000001593">
    <property type="component" value="Unassembled WGS sequence"/>
</dbReference>
<dbReference type="GO" id="GO:0005886">
    <property type="term" value="C:plasma membrane"/>
    <property type="evidence" value="ECO:0000314"/>
    <property type="project" value="UniProtKB"/>
</dbReference>
<dbReference type="GO" id="GO:0047631">
    <property type="term" value="F:ADP-ribose diphosphatase activity"/>
    <property type="evidence" value="ECO:0000315"/>
    <property type="project" value="UniProtKB"/>
</dbReference>
<dbReference type="GO" id="GO:0099604">
    <property type="term" value="F:ligand-gated calcium channel activity"/>
    <property type="evidence" value="ECO:0000314"/>
    <property type="project" value="UniProtKB"/>
</dbReference>
<dbReference type="GO" id="GO:0015280">
    <property type="term" value="F:ligand-gated sodium channel activity"/>
    <property type="evidence" value="ECO:0000314"/>
    <property type="project" value="UniProtKB"/>
</dbReference>
<dbReference type="GO" id="GO:0046872">
    <property type="term" value="F:metal ion binding"/>
    <property type="evidence" value="ECO:0007669"/>
    <property type="project" value="UniProtKB-KW"/>
</dbReference>
<dbReference type="GO" id="GO:0070588">
    <property type="term" value="P:calcium ion transmembrane transport"/>
    <property type="evidence" value="ECO:0000314"/>
    <property type="project" value="UniProtKB"/>
</dbReference>
<dbReference type="GO" id="GO:0035725">
    <property type="term" value="P:sodium ion transmembrane transport"/>
    <property type="evidence" value="ECO:0000314"/>
    <property type="project" value="UniProtKB"/>
</dbReference>
<dbReference type="CDD" id="cd03670">
    <property type="entry name" value="NUDIX_ADPRase_Nudt9"/>
    <property type="match status" value="1"/>
</dbReference>
<dbReference type="FunFam" id="3.90.79.10:FF:000021">
    <property type="entry name" value="ADP-ribose pyrophosphatase, mitochondrial isoform X1"/>
    <property type="match status" value="1"/>
</dbReference>
<dbReference type="Gene3D" id="3.90.79.10">
    <property type="entry name" value="Nucleoside Triphosphate Pyrophosphohydrolase"/>
    <property type="match status" value="1"/>
</dbReference>
<dbReference type="InterPro" id="IPR005821">
    <property type="entry name" value="Ion_trans_dom"/>
</dbReference>
<dbReference type="InterPro" id="IPR015797">
    <property type="entry name" value="NUDIX_hydrolase-like_dom_sf"/>
</dbReference>
<dbReference type="InterPro" id="IPR000086">
    <property type="entry name" value="NUDIX_hydrolase_dom"/>
</dbReference>
<dbReference type="InterPro" id="IPR050927">
    <property type="entry name" value="TRPM"/>
</dbReference>
<dbReference type="InterPro" id="IPR041491">
    <property type="entry name" value="TRPM_SLOG"/>
</dbReference>
<dbReference type="PANTHER" id="PTHR13800:SF12">
    <property type="entry name" value="TRANSIENT RECEPTOR POTENTIAL CATION CHANNEL SUBFAMILY M MEMBER-LIKE 2"/>
    <property type="match status" value="1"/>
</dbReference>
<dbReference type="PANTHER" id="PTHR13800">
    <property type="entry name" value="TRANSIENT RECEPTOR POTENTIAL CATION CHANNEL, SUBFAMILY M, MEMBER 6"/>
    <property type="match status" value="1"/>
</dbReference>
<dbReference type="Pfam" id="PF00520">
    <property type="entry name" value="Ion_trans"/>
    <property type="match status" value="1"/>
</dbReference>
<dbReference type="Pfam" id="PF18139">
    <property type="entry name" value="LSDAT_euk"/>
    <property type="match status" value="1"/>
</dbReference>
<dbReference type="Pfam" id="PF00293">
    <property type="entry name" value="NUDIX"/>
    <property type="match status" value="1"/>
</dbReference>
<dbReference type="Pfam" id="PF25508">
    <property type="entry name" value="TRPM2"/>
    <property type="match status" value="1"/>
</dbReference>
<dbReference type="SUPFAM" id="SSF55811">
    <property type="entry name" value="Nudix"/>
    <property type="match status" value="1"/>
</dbReference>
<dbReference type="PROSITE" id="PS51462">
    <property type="entry name" value="NUDIX"/>
    <property type="match status" value="1"/>
</dbReference>
<evidence type="ECO:0000250" key="1">
    <source>
        <dbReference type="UniProtKB" id="O94759"/>
    </source>
</evidence>
<evidence type="ECO:0000255" key="2">
    <source>
        <dbReference type="PROSITE-ProRule" id="PRU00794"/>
    </source>
</evidence>
<evidence type="ECO:0000256" key="3">
    <source>
        <dbReference type="SAM" id="MobiDB-lite"/>
    </source>
</evidence>
<evidence type="ECO:0000269" key="4">
    <source>
    </source>
</evidence>
<evidence type="ECO:0000269" key="5">
    <source>
    </source>
</evidence>
<evidence type="ECO:0000269" key="6">
    <source>
    </source>
</evidence>
<evidence type="ECO:0000269" key="7">
    <source>
    </source>
</evidence>
<evidence type="ECO:0000303" key="8">
    <source>
    </source>
</evidence>
<evidence type="ECO:0000305" key="9"/>
<evidence type="ECO:0000305" key="10">
    <source>
    </source>
</evidence>
<evidence type="ECO:0000305" key="11">
    <source>
    </source>
</evidence>
<evidence type="ECO:0000305" key="12">
    <source>
    </source>
</evidence>
<evidence type="ECO:0000312" key="13">
    <source>
        <dbReference type="EMBL" id="EDO30135.1"/>
    </source>
</evidence>
<evidence type="ECO:0000312" key="14">
    <source>
        <dbReference type="Proteomes" id="UP000001593"/>
    </source>
</evidence>
<evidence type="ECO:0007744" key="15">
    <source>
        <dbReference type="PDB" id="6CO7"/>
    </source>
</evidence>
<evidence type="ECO:0007829" key="16">
    <source>
        <dbReference type="PDB" id="6CO7"/>
    </source>
</evidence>
<evidence type="ECO:0007829" key="17">
    <source>
        <dbReference type="PDB" id="9JJE"/>
    </source>
</evidence>
<evidence type="ECO:0007829" key="18">
    <source>
        <dbReference type="PDB" id="9JJF"/>
    </source>
</evidence>
<name>TMP2L_NEMVE</name>
<feature type="chain" id="PRO_0000446910" description="Transient receptor potential cation channel subfamily M member-like 2">
    <location>
        <begin position="1"/>
        <end position="1551"/>
    </location>
</feature>
<feature type="topological domain" description="Cytoplasmic" evidence="9">
    <location>
        <begin position="1"/>
        <end position="714"/>
    </location>
</feature>
<feature type="intramembrane region" evidence="1">
    <location>
        <begin position="715"/>
        <end position="730"/>
    </location>
</feature>
<feature type="topological domain" description="Cytoplasmic" evidence="9">
    <location>
        <begin position="731"/>
        <end position="837"/>
    </location>
</feature>
<feature type="transmembrane region" description="Helical" evidence="7">
    <location>
        <begin position="838"/>
        <end position="858"/>
    </location>
</feature>
<feature type="topological domain" description="Extracellular" evidence="9">
    <location>
        <begin position="859"/>
        <end position="877"/>
    </location>
</feature>
<feature type="transmembrane region" description="Helical" evidence="7">
    <location>
        <begin position="878"/>
        <end position="898"/>
    </location>
</feature>
<feature type="topological domain" description="Cytoplasmic" evidence="9">
    <location>
        <begin position="899"/>
        <end position="916"/>
    </location>
</feature>
<feature type="transmembrane region" description="Helical" evidence="7">
    <location>
        <begin position="917"/>
        <end position="937"/>
    </location>
</feature>
<feature type="topological domain" description="Extracellular" evidence="9">
    <location>
        <begin position="938"/>
        <end position="947"/>
    </location>
</feature>
<feature type="transmembrane region" description="Helical" evidence="7">
    <location>
        <begin position="948"/>
        <end position="968"/>
    </location>
</feature>
<feature type="topological domain" description="Cytoplasmic" evidence="9">
    <location>
        <begin position="969"/>
        <end position="980"/>
    </location>
</feature>
<feature type="transmembrane region" description="Helical" evidence="7">
    <location>
        <begin position="981"/>
        <end position="1001"/>
    </location>
</feature>
<feature type="topological domain" description="Extracellular" evidence="9">
    <location>
        <begin position="1002"/>
        <end position="1018"/>
    </location>
</feature>
<feature type="intramembrane region" description="Pore-forming" evidence="7">
    <location>
        <begin position="1019"/>
        <end position="1034"/>
    </location>
</feature>
<feature type="topological domain" description="Extracellular" evidence="9">
    <location>
        <begin position="1035"/>
        <end position="1059"/>
    </location>
</feature>
<feature type="transmembrane region" description="Helical" evidence="7">
    <location>
        <begin position="1060"/>
        <end position="1080"/>
    </location>
</feature>
<feature type="topological domain" description="Cytoplasmic" evidence="9">
    <location>
        <begin position="1081"/>
        <end position="1116"/>
    </location>
</feature>
<feature type="intramembrane region" evidence="1">
    <location>
        <begin position="1117"/>
        <end position="1135"/>
    </location>
</feature>
<feature type="topological domain" description="Cytoplasmic" evidence="9">
    <location>
        <begin position="1136"/>
        <end position="1551"/>
    </location>
</feature>
<feature type="domain" description="Nudix hydrolase" evidence="2">
    <location>
        <begin position="1394"/>
        <end position="1546"/>
    </location>
</feature>
<feature type="region of interest" description="Disordered" evidence="3">
    <location>
        <begin position="744"/>
        <end position="767"/>
    </location>
</feature>
<feature type="coiled-coil region" evidence="7">
    <location>
        <begin position="1184"/>
        <end position="1209"/>
    </location>
</feature>
<feature type="short sequence motif" description="Selectivity filter" evidence="7">
    <location>
        <begin position="1035"/>
        <end position="1037"/>
    </location>
</feature>
<feature type="short sequence motif" description="Prevents fast channel inactivation" evidence="7">
    <location>
        <begin position="1040"/>
        <end position="1042"/>
    </location>
</feature>
<feature type="short sequence motif" description="Nudix box" evidence="2">
    <location>
        <begin position="1428"/>
        <end position="1449"/>
    </location>
</feature>
<feature type="binding site" evidence="7 15">
    <location>
        <position position="893"/>
    </location>
    <ligand>
        <name>Ca(2+)</name>
        <dbReference type="ChEBI" id="CHEBI:29108"/>
    </ligand>
</feature>
<feature type="binding site" evidence="7 15">
    <location>
        <position position="896"/>
    </location>
    <ligand>
        <name>Ca(2+)</name>
        <dbReference type="ChEBI" id="CHEBI:29108"/>
    </ligand>
</feature>
<feature type="binding site" evidence="7 15">
    <location>
        <position position="918"/>
    </location>
    <ligand>
        <name>Ca(2+)</name>
        <dbReference type="ChEBI" id="CHEBI:29108"/>
    </ligand>
</feature>
<feature type="binding site" evidence="7 15">
    <location>
        <position position="921"/>
    </location>
    <ligand>
        <name>Ca(2+)</name>
        <dbReference type="ChEBI" id="CHEBI:29108"/>
    </ligand>
</feature>
<feature type="glycosylation site" description="N-linked (GlcNAc...) asparagine" evidence="7 15">
    <location>
        <position position="1017"/>
    </location>
</feature>
<feature type="mutagenesis site" description="Severe loss of Ca(2+) sensitivity and increased sensitivity to phosphatidylinositol 4,5-bisphosphate-mediated activation." evidence="7">
    <original>Q</original>
    <variation>A</variation>
    <location>
        <position position="896"/>
    </location>
</feature>
<feature type="mutagenesis site" description="Severe reduction in ADP-ribose-mediated channel activation." evidence="6">
    <original>K</original>
    <variation>N</variation>
    <location>
        <position position="908"/>
    </location>
</feature>
<feature type="mutagenesis site" description="Severe loss of Ca(2+) sensitivity and increased sensitivity to phosphatidylinositol 4,5-bisphosphate-mediated activation." evidence="7">
    <original>N</original>
    <variation>A</variation>
    <location>
        <position position="918"/>
    </location>
</feature>
<feature type="mutagenesis site" description="Severe loss of Ca(2+) sensitivity and increased sensitivity to phosphatidylinositol 4,5-bisphosphate-mediated activation." evidence="7">
    <original>D</original>
    <variation>A</variation>
    <location>
        <position position="921"/>
    </location>
</feature>
<feature type="mutagenesis site" description="Mild decrease in channel activation." evidence="4 6">
    <original>ELF</original>
    <variation>QLP</variation>
    <location>
        <begin position="1037"/>
        <end position="1039"/>
    </location>
</feature>
<feature type="mutagenesis site" description="Induces fast inactivation of the channel." evidence="7">
    <original>LDE</original>
    <variation>GY</variation>
    <location>
        <begin position="1040"/>
        <end position="1042"/>
    </location>
</feature>
<feature type="mutagenesis site" description="Does not affect channel activity." evidence="7">
    <original>K</original>
    <variation>A</variation>
    <variation>E</variation>
    <location>
        <position position="1047"/>
    </location>
</feature>
<feature type="mutagenesis site" description="Mild loss of Ca(2+) sensitivity and increased sensitivity to phosphatidylinositol 4,5-bisphosphate-mediated activation." evidence="7">
    <original>E</original>
    <variation>A</variation>
    <location>
        <position position="1110"/>
    </location>
</feature>
<feature type="mutagenesis site" description="Induces transient spontaneous channel activity. Does not affect channel activity by ADP-ribose. Acquires sensitivity to oxidative stress. In response to oxidative stress, induces intracellular Ca(2+) oscillations instead of a sustained Ca(2+) increase." evidence="4">
    <location>
        <begin position="1149"/>
        <end position="1463"/>
    </location>
</feature>
<feature type="mutagenesis site" description="Does not affect channel activity. Acquires sensitivity to oxidative stress." evidence="5">
    <original>N</original>
    <variation>D</variation>
    <location>
        <position position="1365"/>
    </location>
</feature>
<feature type="mutagenesis site" description="Does not affect channel activity by ADP-ribose. Acquires sensitivity to oxidative stress." evidence="4">
    <original>Q</original>
    <variation>R</variation>
    <location>
        <position position="1438"/>
    </location>
</feature>
<feature type="mutagenesis site" description="Does not affect channel activity by ADP-ribose. Acquires sensitivity to oxidative stress." evidence="5">
    <original>AEFGE</original>
    <variation>RILRQ</variation>
    <location>
        <begin position="1442"/>
        <end position="1446"/>
    </location>
</feature>
<feature type="turn" evidence="16">
    <location>
        <begin position="13"/>
        <end position="15"/>
    </location>
</feature>
<feature type="strand" evidence="16">
    <location>
        <begin position="46"/>
        <end position="48"/>
    </location>
</feature>
<feature type="strand" evidence="16">
    <location>
        <begin position="89"/>
        <end position="91"/>
    </location>
</feature>
<feature type="strand" evidence="17">
    <location>
        <begin position="95"/>
        <end position="98"/>
    </location>
</feature>
<feature type="strand" evidence="17">
    <location>
        <begin position="101"/>
        <end position="104"/>
    </location>
</feature>
<feature type="strand" evidence="17">
    <location>
        <begin position="109"/>
        <end position="114"/>
    </location>
</feature>
<feature type="helix" evidence="17">
    <location>
        <begin position="120"/>
        <end position="129"/>
    </location>
</feature>
<feature type="strand" evidence="17">
    <location>
        <begin position="139"/>
        <end position="143"/>
    </location>
</feature>
<feature type="strand" evidence="17">
    <location>
        <begin position="146"/>
        <end position="148"/>
    </location>
</feature>
<feature type="helix" evidence="17">
    <location>
        <begin position="153"/>
        <end position="170"/>
    </location>
</feature>
<feature type="strand" evidence="17">
    <location>
        <begin position="173"/>
        <end position="176"/>
    </location>
</feature>
<feature type="strand" evidence="17">
    <location>
        <begin position="180"/>
        <end position="182"/>
    </location>
</feature>
<feature type="helix" evidence="17">
    <location>
        <begin position="183"/>
        <end position="195"/>
    </location>
</feature>
<feature type="strand" evidence="17">
    <location>
        <begin position="196"/>
        <end position="198"/>
    </location>
</feature>
<feature type="strand" evidence="16">
    <location>
        <begin position="200"/>
        <end position="202"/>
    </location>
</feature>
<feature type="strand" evidence="17">
    <location>
        <begin position="206"/>
        <end position="211"/>
    </location>
</feature>
<feature type="turn" evidence="17">
    <location>
        <begin position="212"/>
        <end position="214"/>
    </location>
</feature>
<feature type="helix" evidence="16">
    <location>
        <begin position="218"/>
        <end position="221"/>
    </location>
</feature>
<feature type="strand" evidence="16">
    <location>
        <begin position="224"/>
        <end position="226"/>
    </location>
</feature>
<feature type="strand" evidence="17">
    <location>
        <begin position="251"/>
        <end position="256"/>
    </location>
</feature>
<feature type="strand" evidence="17">
    <location>
        <begin position="258"/>
        <end position="260"/>
    </location>
</feature>
<feature type="helix" evidence="17">
    <location>
        <begin position="265"/>
        <end position="280"/>
    </location>
</feature>
<feature type="strand" evidence="16">
    <location>
        <begin position="286"/>
        <end position="290"/>
    </location>
</feature>
<feature type="strand" evidence="17">
    <location>
        <begin position="296"/>
        <end position="300"/>
    </location>
</feature>
<feature type="helix" evidence="17">
    <location>
        <begin position="305"/>
        <end position="315"/>
    </location>
</feature>
<feature type="turn" evidence="17">
    <location>
        <begin position="316"/>
        <end position="318"/>
    </location>
</feature>
<feature type="strand" evidence="17">
    <location>
        <begin position="321"/>
        <end position="325"/>
    </location>
</feature>
<feature type="strand" evidence="17">
    <location>
        <begin position="327"/>
        <end position="330"/>
    </location>
</feature>
<feature type="helix" evidence="17">
    <location>
        <begin position="331"/>
        <end position="338"/>
    </location>
</feature>
<feature type="strand" evidence="18">
    <location>
        <begin position="339"/>
        <end position="341"/>
    </location>
</feature>
<feature type="strand" evidence="17">
    <location>
        <begin position="347"/>
        <end position="349"/>
    </location>
</feature>
<feature type="strand" evidence="17">
    <location>
        <begin position="356"/>
        <end position="358"/>
    </location>
</feature>
<feature type="helix" evidence="17">
    <location>
        <begin position="359"/>
        <end position="368"/>
    </location>
</feature>
<feature type="helix" evidence="17">
    <location>
        <begin position="375"/>
        <end position="385"/>
    </location>
</feature>
<feature type="turn" evidence="17">
    <location>
        <begin position="389"/>
        <end position="391"/>
    </location>
</feature>
<feature type="strand" evidence="17">
    <location>
        <begin position="392"/>
        <end position="399"/>
    </location>
</feature>
<feature type="strand" evidence="17">
    <location>
        <begin position="401"/>
        <end position="403"/>
    </location>
</feature>
<feature type="helix" evidence="17">
    <location>
        <begin position="405"/>
        <end position="416"/>
    </location>
</feature>
<feature type="helix" evidence="17">
    <location>
        <begin position="421"/>
        <end position="430"/>
    </location>
</feature>
<feature type="helix" evidence="17">
    <location>
        <begin position="434"/>
        <end position="440"/>
    </location>
</feature>
<feature type="strand" evidence="17">
    <location>
        <begin position="444"/>
        <end position="446"/>
    </location>
</feature>
<feature type="helix" evidence="17">
    <location>
        <begin position="450"/>
        <end position="462"/>
    </location>
</feature>
<feature type="helix" evidence="17">
    <location>
        <begin position="466"/>
        <end position="473"/>
    </location>
</feature>
<feature type="turn" evidence="17">
    <location>
        <begin position="474"/>
        <end position="476"/>
    </location>
</feature>
<feature type="helix" evidence="17">
    <location>
        <begin position="479"/>
        <end position="482"/>
    </location>
</feature>
<feature type="helix" evidence="17">
    <location>
        <begin position="485"/>
        <end position="493"/>
    </location>
</feature>
<feature type="strand" evidence="17">
    <location>
        <begin position="497"/>
        <end position="500"/>
    </location>
</feature>
<feature type="helix" evidence="17">
    <location>
        <begin position="501"/>
        <end position="512"/>
    </location>
</feature>
<feature type="helix" evidence="17">
    <location>
        <begin position="519"/>
        <end position="530"/>
    </location>
</feature>
<feature type="turn" evidence="16">
    <location>
        <begin position="531"/>
        <end position="533"/>
    </location>
</feature>
<feature type="turn" evidence="17">
    <location>
        <begin position="537"/>
        <end position="540"/>
    </location>
</feature>
<feature type="helix" evidence="17">
    <location>
        <begin position="542"/>
        <end position="544"/>
    </location>
</feature>
<feature type="helix" evidence="17">
    <location>
        <begin position="579"/>
        <end position="589"/>
    </location>
</feature>
<feature type="helix" evidence="17">
    <location>
        <begin position="593"/>
        <end position="602"/>
    </location>
</feature>
<feature type="strand" evidence="17">
    <location>
        <begin position="603"/>
        <end position="605"/>
    </location>
</feature>
<feature type="helix" evidence="17">
    <location>
        <begin position="606"/>
        <end position="626"/>
    </location>
</feature>
<feature type="strand" evidence="17">
    <location>
        <begin position="628"/>
        <end position="630"/>
    </location>
</feature>
<feature type="helix" evidence="17">
    <location>
        <begin position="634"/>
        <end position="656"/>
    </location>
</feature>
<feature type="helix" evidence="17">
    <location>
        <begin position="660"/>
        <end position="666"/>
    </location>
</feature>
<feature type="helix" evidence="17">
    <location>
        <begin position="672"/>
        <end position="674"/>
    </location>
</feature>
<feature type="helix" evidence="17">
    <location>
        <begin position="679"/>
        <end position="685"/>
    </location>
</feature>
<feature type="helix" evidence="17">
    <location>
        <begin position="689"/>
        <end position="692"/>
    </location>
</feature>
<feature type="helix" evidence="17">
    <location>
        <begin position="695"/>
        <end position="705"/>
    </location>
</feature>
<feature type="turn" evidence="17">
    <location>
        <begin position="706"/>
        <end position="708"/>
    </location>
</feature>
<feature type="helix" evidence="17">
    <location>
        <begin position="715"/>
        <end position="722"/>
    </location>
</feature>
<feature type="helix" evidence="17">
    <location>
        <begin position="725"/>
        <end position="727"/>
    </location>
</feature>
<feature type="helix" evidence="17">
    <location>
        <begin position="728"/>
        <end position="731"/>
    </location>
</feature>
<feature type="helix" evidence="16">
    <location>
        <begin position="735"/>
        <end position="749"/>
    </location>
</feature>
<feature type="helix" evidence="16">
    <location>
        <begin position="814"/>
        <end position="819"/>
    </location>
</feature>
<feature type="helix" evidence="17">
    <location>
        <begin position="827"/>
        <end position="834"/>
    </location>
</feature>
<feature type="helix" evidence="17">
    <location>
        <begin position="837"/>
        <end position="860"/>
    </location>
</feature>
<feature type="strand" evidence="17">
    <location>
        <begin position="868"/>
        <end position="870"/>
    </location>
</feature>
<feature type="helix" evidence="17">
    <location>
        <begin position="871"/>
        <end position="874"/>
    </location>
</feature>
<feature type="helix" evidence="17">
    <location>
        <begin position="877"/>
        <end position="898"/>
    </location>
</feature>
<feature type="strand" evidence="17">
    <location>
        <begin position="900"/>
        <end position="904"/>
    </location>
</feature>
<feature type="helix" evidence="17">
    <location>
        <begin position="905"/>
        <end position="912"/>
    </location>
</feature>
<feature type="helix" evidence="17">
    <location>
        <begin position="916"/>
        <end position="933"/>
    </location>
</feature>
<feature type="helix" evidence="17">
    <location>
        <begin position="934"/>
        <end position="937"/>
    </location>
</feature>
<feature type="helix" evidence="17">
    <location>
        <begin position="940"/>
        <end position="961"/>
    </location>
</feature>
<feature type="helix" evidence="17">
    <location>
        <begin position="962"/>
        <end position="967"/>
    </location>
</feature>
<feature type="helix" evidence="17">
    <location>
        <begin position="971"/>
        <end position="1007"/>
    </location>
</feature>
<feature type="strand" evidence="17">
    <location>
        <begin position="1010"/>
        <end position="1012"/>
    </location>
</feature>
<feature type="helix" evidence="17">
    <location>
        <begin position="1019"/>
        <end position="1033"/>
    </location>
</feature>
<feature type="turn" evidence="17">
    <location>
        <begin position="1034"/>
        <end position="1036"/>
    </location>
</feature>
<feature type="helix" evidence="17">
    <location>
        <begin position="1040"/>
        <end position="1043"/>
    </location>
</feature>
<feature type="turn" evidence="17">
    <location>
        <begin position="1048"/>
        <end position="1051"/>
    </location>
</feature>
<feature type="helix" evidence="17">
    <location>
        <begin position="1058"/>
        <end position="1072"/>
    </location>
</feature>
<feature type="turn" evidence="17">
    <location>
        <begin position="1073"/>
        <end position="1076"/>
    </location>
</feature>
<feature type="helix" evidence="17">
    <location>
        <begin position="1077"/>
        <end position="1093"/>
    </location>
</feature>
<feature type="helix" evidence="17">
    <location>
        <begin position="1096"/>
        <end position="1112"/>
    </location>
</feature>
<feature type="turn" evidence="16">
    <location>
        <begin position="1119"/>
        <end position="1121"/>
    </location>
</feature>
<feature type="helix" evidence="17">
    <location>
        <begin position="1122"/>
        <end position="1130"/>
    </location>
</feature>
<feature type="helix" evidence="17">
    <location>
        <begin position="1155"/>
        <end position="1181"/>
    </location>
</feature>
<feature type="helix" evidence="17">
    <location>
        <begin position="1184"/>
        <end position="1205"/>
    </location>
</feature>
<gene>
    <name evidence="8" type="primary">TRPM2</name>
    <name evidence="13" type="ORF">v1g248535</name>
</gene>
<organism evidence="14">
    <name type="scientific">Nematostella vectensis</name>
    <name type="common">Starlet sea anemone</name>
    <dbReference type="NCBI Taxonomy" id="45351"/>
    <lineage>
        <taxon>Eukaryota</taxon>
        <taxon>Metazoa</taxon>
        <taxon>Cnidaria</taxon>
        <taxon>Anthozoa</taxon>
        <taxon>Hexacorallia</taxon>
        <taxon>Actiniaria</taxon>
        <taxon>Edwardsiidae</taxon>
        <taxon>Nematostella</taxon>
    </lineage>
</organism>
<proteinExistence type="evidence at protein level"/>
<sequence>MGKDSFTPLYDGGDSSHVHLNKFGSNQLSQSKKSWIARNFSRRECIRFVPKSHDVSRCKCGRPRERHSQQALESGQGSEEWNVASCTTKHPTNAYGEIDFEGYGGQKRAPYLRMSHDTDANLVITLMLKRWNLEIPNLVISVTGGAKSFVLKPRLREMFRRGLIKAAKTTGAWIITGGTNTGVMKHVGEAVKEQQLMFGSDTQVNVIGIATWGIVDKQSDLISEKNGKYPALYSMEPTPGHQGAMLDPNHSHFFLVDDGTEGKYGVEIGMRSRIEEAIMKVKTDSRSEAGSIGVPVVLLVLEGGPNTVATMYELIKKKVPAVVIDGSGRAASVVGFAYNHTIKRNVDGQTINVIDPQYEDEVRAKVVEVFGAKGADKTYSMIKDVLEDEKMISVYSLDGEISQDIDLAILKALLKANRSSPVAQLNLALAWNRIDLAKSDIFTEEQQWTTETLSAAMLTALLDDKAEFAELFLQNGLSMREFLSLDILCKLYAEVPGNTTIKPLLQKEMGKRQVKTIDMDVVGEVIEELMGDMFESYYRKDGHYFGELASYAEGLVLKNRKSSKDLLANINRIDPLPTPYLDVFLWAVLCNRRELARVLWEAGREPMAAALMASRLLKRMASRAQEDNTITDISSDLYDHARLFEERAVGVLDECFNENETLSQTLLVRELDHYSRMTALELAVSAESQDFIAHTSCQVLLTRLWMGTMAMNTRWWKVLVCLYLPVLIFPIIYFVPDEQHERQAAEREHQKSLNQKSSKVKSHKEKNDAPVVPVYRSKEEKAVSNDEEARVGTENEEEDFQLEDYIPEIREDDSMEVIMRNKKLGFCDRIMHFYSAPFSKFVGNVVGYLAFIFLYAYVVLFNFPRFDPAKTLGGIHPTEIVLYFWVFTILIEEIRQLAAKPPKYIKDKVSVYFSDTWNFVDIFSLTVFIIAIILRFFTNSRIFTASRIILSLDIIFFIVRSLQIFSVNRLLGPKLVMIQKMMQDLAQFIIILAVFTIAYGIALHAVMFPSPGIYARNNTWVTITSVVQYPYWQMYGELFLDEIQGEKPKEFGEVDPDGRWLSPLLLAIYMVFTNILLLNLLIAIFNYTFERVQEDSDKVWKFQRYDLVQEYHSRPVFAPPLVLLGHILIFIRWVWRMCRCGHPPRGSTMKIGLSPAEMEQMDNWEFQAAEMYIHQQQQKNSGTLEERVRALGDRVDCINSQLNRVLDSMSGTRAHALTDGNGLEGGHDSEGRLARMEVELSSNSESLQKILALLQQQPPVKGQAAVPIQLTLLHYKARSSPYPGSTAKRFAVQDNMVDWQVPFPDYKPVNYTAPVVLANPVWADKDLMAMSPRPELPYNQMDHTCNVNRVSYNGTYVVKDGLPLNPMGRTGMQGRGLLGRFGPNHAADPVVTRWKRTSAGVMLQGGKKVLEFVAIQRKDNNQWAIPGGMVEPGQLVTQALKAEFGEEAMAKLNVSQEEKERIAKQIERLFQQGQEIYKGYVDDPRNTDNAWMETVAVNFHDDKGDLFGDITLQAGDDAAAVRWQRVSGNIPLYASHVSILEKVAKMRDAAF</sequence>
<comment type="function">
    <text evidence="4 5 6 7">Nonselective, voltage-independent cation channel that mediates Ca(2+) and to a lesser extent Na(+) influx, leading to increased cytoplasmic Ca(2+) levels (PubMed:25620041, PubMed:27333281, PubMed:28775320, PubMed:29745897). Functions as a ligand-gated ion channel (PubMed:25620041, PubMed:27333281, PubMed:28775320, PubMed:29745897). Binding of ADP-ribose causes a conformation change; the channel is primed but still requires Ca(2+) binding to trigger channel opening (PubMed:25620041, PubMed:27333281, PubMed:28775320, PubMed:29745897). May have ADP-ribose pyrophosphatase activity which reduces ADP-ribose levels induced by oxidative stress, thus preventing the channel activation by reactive oxygen species (PubMed:25620041, PubMed:27333281).</text>
</comment>
<comment type="activity regulation">
    <text evidence="4 5 6 7">Activated by phosphatidylinositol 4,5-bisphosphate (PIP2) (PubMed:29745897). Although PIP2 is essential for the channel activation, its contribution to the level of channel activity is minimal (PubMed:29745897). Also activated by diphosphate ribose-2'-phosphate (PubMed:27333281). Upon binding to ADPR, channel activation requires only a short initial cytosolic Ca(2+) increase, then the activation is sustained by the uptake of extracellular Ca(2+) (PubMed:25620041, PubMed:29745897). Activated by 2-aminoethyl diphenylborinate (2-APB) in a Ca(2+)-dependent manner (PubMed:28775320). 2-APB prevents the inactivation of the channel (PubMed:28775320).</text>
</comment>
<comment type="subunit">
    <text evidence="7">Homotetramer.</text>
</comment>
<comment type="subcellular location">
    <subcellularLocation>
        <location evidence="11 12">Cell membrane</location>
        <topology evidence="7">Multi-pass membrane protein</topology>
    </subcellularLocation>
</comment>
<comment type="domain">
    <text evidence="5">The Nudix hydrolase domain is dispensable for ADP-ribose-dependent channel activation. May be involved in the regulation of ADP-ribose intracellular levels. Essential to prevent response to oxidative stress.</text>
</comment>
<comment type="similarity">
    <text evidence="9">Belongs to the transient receptor (TC 1.A.4) family. LTrpC subfamily. TRPM2 sub-subfamily.</text>
</comment>
<comment type="caution">
    <text evidence="11">Unlike in human TRPM2, residues in the Nudix box (AEFGE) that are important for ADP-ribose pyrophosphatase activity are conserved suggesting that N.vectensis TRPM2 may have ADP-ribose pyrophosphatase activity.</text>
</comment>
<reference evidence="14" key="1">
    <citation type="journal article" date="2007" name="Science">
        <title>Sea anemone genome reveals ancestral eumetazoan gene repertoire and genomic organization.</title>
        <authorList>
            <person name="Putnam N.H."/>
            <person name="Srivastava M."/>
            <person name="Hellsten U."/>
            <person name="Dirks B."/>
            <person name="Chapman J."/>
            <person name="Salamov A."/>
            <person name="Terry A."/>
            <person name="Shapiro H."/>
            <person name="Lindquist E."/>
            <person name="Kapitonov V.V."/>
            <person name="Jurka J."/>
            <person name="Genikhovich G."/>
            <person name="Grigoriev I.V."/>
            <person name="Lucas S.M."/>
            <person name="Steele R.E."/>
            <person name="Finnerty J.R."/>
            <person name="Technau U."/>
            <person name="Martindale M.Q."/>
            <person name="Rokhsar D.S."/>
        </authorList>
    </citation>
    <scope>NUCLEOTIDE SEQUENCE [LARGE SCALE GENOMIC DNA]</scope>
    <source>
        <strain evidence="14">CH2 X CH6</strain>
    </source>
</reference>
<reference evidence="9" key="2">
    <citation type="journal article" date="2015" name="Sci. Rep.">
        <title>Functional characterisation of a TRPM2 orthologue from the sea anemone Nematostella vectensis in human cells.</title>
        <authorList>
            <person name="Kuehn F.J."/>
            <person name="Kuehn C."/>
            <person name="Lueckhoff A."/>
        </authorList>
    </citation>
    <scope>FUNCTION</scope>
    <scope>ACTIVITY REGULATION</scope>
    <scope>MUTAGENESIS OF 1037-GLU--PHE-1039; GLN-1438 AND 1449-MET--ALA-1463</scope>
</reference>
<reference evidence="9" key="3">
    <citation type="journal article" date="2016" name="PLoS ONE">
        <title>ADP-Ribose Activates the TRPM2 Channel from the Sea Anemone Nematostella vectensis Independently of the NUDT9H Domain.</title>
        <authorList>
            <person name="Kuehn F.J."/>
            <person name="Kuehn C."/>
            <person name="Winking M."/>
            <person name="Hoffmann D.C."/>
            <person name="Lueckhoff A."/>
        </authorList>
    </citation>
    <scope>FUNCTION</scope>
    <scope>ACTIVITY REGULATION</scope>
    <scope>SUBCELLULAR LOCATION</scope>
    <scope>DOMAIN</scope>
    <scope>MUTAGENESIS OF ASN-1365 AND 1442-ALA--GLU-1446</scope>
</reference>
<reference evidence="9" key="4">
    <citation type="journal article" date="2017" name="Sci. Rep.">
        <title>Modulation of activation and inactivation by Ca2+ and 2-APB in the pore of an archetypal TRPM channel from Nematostella vectensis.</title>
        <authorList>
            <person name="Kuehn F.J.P."/>
            <person name="Mathis W."/>
            <person name="Cornelia K."/>
            <person name="Hoffmann D.C."/>
            <person name="Lueckhoff A."/>
        </authorList>
    </citation>
    <scope>FUNCTION</scope>
    <scope>ACTIVITY REGULATION</scope>
    <scope>SUBCELLULAR LOCATION</scope>
    <scope>MUTAGENESIS OF LYS-908 AND 1037-GLU--PHE-1039</scope>
</reference>
<reference evidence="15" key="5">
    <citation type="journal article" date="2018" name="Elife">
        <title>Structure of a TRPM2 channel in complex with Ca2+ explains unique gating regulation.</title>
        <authorList>
            <person name="Zhang Z."/>
            <person name="Toth B."/>
            <person name="Szollosi A."/>
            <person name="Chen J."/>
            <person name="Csanady L."/>
        </authorList>
    </citation>
    <scope>STRUCTURE BY ELECTRON MICROSCOPY (3.07 ANGSTROMS) IN COMPLEX WITH CALCIUM</scope>
    <scope>FUNCTION</scope>
    <scope>ACTIVITY REGULATION</scope>
    <scope>SUBUNIT</scope>
    <scope>SUBCELLULAR LOCATION</scope>
    <scope>MOTIF</scope>
    <scope>COILED COIL</scope>
    <scope>GLYCOSYLATION AT ASN-1017</scope>
    <scope>MUTAGENESIS OF GLN-896; ASN-918; ASP-921; 1040-LEU--GLU-1042; LYS-1047 AND GLU-1110</scope>
</reference>
<protein>
    <recommendedName>
        <fullName evidence="10">Transient receptor potential cation channel subfamily M member-like 2</fullName>
        <shortName evidence="8">nvTRPM2</shortName>
    </recommendedName>
</protein>